<organism>
    <name type="scientific">Wolbachia sp. subsp. Brugia malayi (strain TRS)</name>
    <dbReference type="NCBI Taxonomy" id="292805"/>
    <lineage>
        <taxon>Bacteria</taxon>
        <taxon>Pseudomonadati</taxon>
        <taxon>Pseudomonadota</taxon>
        <taxon>Alphaproteobacteria</taxon>
        <taxon>Rickettsiales</taxon>
        <taxon>Anaplasmataceae</taxon>
        <taxon>Wolbachieae</taxon>
        <taxon>Wolbachia</taxon>
    </lineage>
</organism>
<proteinExistence type="inferred from homology"/>
<accession>Q5GTP4</accession>
<gene>
    <name evidence="1" type="primary">trhO</name>
    <name type="ordered locus">Wbm0038</name>
</gene>
<feature type="chain" id="PRO_0000161538" description="tRNA uridine(34) hydroxylase">
    <location>
        <begin position="1"/>
        <end position="269"/>
    </location>
</feature>
<feature type="domain" description="Rhodanese" evidence="1">
    <location>
        <begin position="121"/>
        <end position="214"/>
    </location>
</feature>
<feature type="active site" description="Cysteine persulfide intermediate" evidence="1">
    <location>
        <position position="174"/>
    </location>
</feature>
<sequence length="269" mass="30838">MSFVIATFYHFVKLSNYYDMKDEIKAACDNFELKGTILLAEEGINATISGERNAINKIFNFLCSDYRLKDLTWKESAAKYQPFSKMKVRLKREIVNLGVSNLDTSLRGKYIDPDHWDDFISQPDVLVIDTRNEYEVKLGKFKNAINPYIQYFREFPQWAKSFSKNKNLKVAMYCTGGIRCEKSTAYMKSLGFNDVYHLKGGILSYLERTHNKNGNWEGECFVFDDRIAINSSLAPSNKIKCIFCSNQVSADELKSVSRGQVVCSDCNPS</sequence>
<keyword id="KW-0560">Oxidoreductase</keyword>
<keyword id="KW-1185">Reference proteome</keyword>
<keyword id="KW-0819">tRNA processing</keyword>
<comment type="function">
    <text evidence="1">Catalyzes oxygen-dependent 5-hydroxyuridine (ho5U) modification at position 34 in tRNAs.</text>
</comment>
<comment type="catalytic activity">
    <reaction evidence="1">
        <text>uridine(34) in tRNA + AH2 + O2 = 5-hydroxyuridine(34) in tRNA + A + H2O</text>
        <dbReference type="Rhea" id="RHEA:64224"/>
        <dbReference type="Rhea" id="RHEA-COMP:11727"/>
        <dbReference type="Rhea" id="RHEA-COMP:13381"/>
        <dbReference type="ChEBI" id="CHEBI:13193"/>
        <dbReference type="ChEBI" id="CHEBI:15377"/>
        <dbReference type="ChEBI" id="CHEBI:15379"/>
        <dbReference type="ChEBI" id="CHEBI:17499"/>
        <dbReference type="ChEBI" id="CHEBI:65315"/>
        <dbReference type="ChEBI" id="CHEBI:136877"/>
    </reaction>
</comment>
<comment type="similarity">
    <text evidence="1">Belongs to the TrhO family.</text>
</comment>
<reference key="1">
    <citation type="journal article" date="2005" name="PLoS Biol.">
        <title>The Wolbachia genome of Brugia malayi: endosymbiont evolution within a human pathogenic nematode.</title>
        <authorList>
            <person name="Foster J."/>
            <person name="Ganatra M."/>
            <person name="Kamal I."/>
            <person name="Ware J."/>
            <person name="Makarova K."/>
            <person name="Ivanova N."/>
            <person name="Bhattacharyya A."/>
            <person name="Kapatral V."/>
            <person name="Kumar S."/>
            <person name="Posfai J."/>
            <person name="Vincze T."/>
            <person name="Ingram J."/>
            <person name="Moran L."/>
            <person name="Lapidus A."/>
            <person name="Omelchenko M."/>
            <person name="Kyrpides N."/>
            <person name="Ghedin E."/>
            <person name="Wang S."/>
            <person name="Goltsman E."/>
            <person name="Joukov V."/>
            <person name="Ostrovskaya O."/>
            <person name="Tsukerman K."/>
            <person name="Mazur M."/>
            <person name="Comb D."/>
            <person name="Koonin E."/>
            <person name="Slatko B."/>
        </authorList>
    </citation>
    <scope>NUCLEOTIDE SEQUENCE [LARGE SCALE GENOMIC DNA]</scope>
    <source>
        <strain>TRS</strain>
    </source>
</reference>
<name>TRHO_WOLTR</name>
<protein>
    <recommendedName>
        <fullName evidence="1">tRNA uridine(34) hydroxylase</fullName>
        <ecNumber evidence="1">1.14.-.-</ecNumber>
    </recommendedName>
    <alternativeName>
        <fullName evidence="1">tRNA hydroxylation protein O</fullName>
    </alternativeName>
</protein>
<dbReference type="EC" id="1.14.-.-" evidence="1"/>
<dbReference type="EMBL" id="AE017321">
    <property type="protein sequence ID" value="AAW70630.1"/>
    <property type="molecule type" value="Genomic_DNA"/>
</dbReference>
<dbReference type="RefSeq" id="WP_011256240.1">
    <property type="nucleotide sequence ID" value="NC_006833.1"/>
</dbReference>
<dbReference type="SMR" id="Q5GTP4"/>
<dbReference type="KEGG" id="wbm:Wbm0038"/>
<dbReference type="eggNOG" id="COG1054">
    <property type="taxonomic scope" value="Bacteria"/>
</dbReference>
<dbReference type="HOGENOM" id="CLU_038878_0_1_5"/>
<dbReference type="Proteomes" id="UP000000534">
    <property type="component" value="Chromosome"/>
</dbReference>
<dbReference type="GO" id="GO:0016705">
    <property type="term" value="F:oxidoreductase activity, acting on paired donors, with incorporation or reduction of molecular oxygen"/>
    <property type="evidence" value="ECO:0007669"/>
    <property type="project" value="UniProtKB-UniRule"/>
</dbReference>
<dbReference type="GO" id="GO:0006400">
    <property type="term" value="P:tRNA modification"/>
    <property type="evidence" value="ECO:0007669"/>
    <property type="project" value="UniProtKB-UniRule"/>
</dbReference>
<dbReference type="CDD" id="cd01518">
    <property type="entry name" value="RHOD_YceA"/>
    <property type="match status" value="1"/>
</dbReference>
<dbReference type="Gene3D" id="3.30.70.100">
    <property type="match status" value="1"/>
</dbReference>
<dbReference type="Gene3D" id="3.40.250.10">
    <property type="entry name" value="Rhodanese-like domain"/>
    <property type="match status" value="1"/>
</dbReference>
<dbReference type="HAMAP" id="MF_00469">
    <property type="entry name" value="TrhO"/>
    <property type="match status" value="1"/>
</dbReference>
<dbReference type="InterPro" id="IPR001763">
    <property type="entry name" value="Rhodanese-like_dom"/>
</dbReference>
<dbReference type="InterPro" id="IPR036873">
    <property type="entry name" value="Rhodanese-like_dom_sf"/>
</dbReference>
<dbReference type="InterPro" id="IPR020936">
    <property type="entry name" value="TrhO"/>
</dbReference>
<dbReference type="InterPro" id="IPR040503">
    <property type="entry name" value="TRHO_N"/>
</dbReference>
<dbReference type="NCBIfam" id="NF001136">
    <property type="entry name" value="PRK00142.1-4"/>
    <property type="match status" value="1"/>
</dbReference>
<dbReference type="PANTHER" id="PTHR43268:SF3">
    <property type="entry name" value="RHODANESE-LIKE DOMAIN-CONTAINING PROTEIN 7-RELATED"/>
    <property type="match status" value="1"/>
</dbReference>
<dbReference type="PANTHER" id="PTHR43268">
    <property type="entry name" value="THIOSULFATE SULFURTRANSFERASE/RHODANESE-LIKE DOMAIN-CONTAINING PROTEIN 2"/>
    <property type="match status" value="1"/>
</dbReference>
<dbReference type="Pfam" id="PF00581">
    <property type="entry name" value="Rhodanese"/>
    <property type="match status" value="1"/>
</dbReference>
<dbReference type="Pfam" id="PF17773">
    <property type="entry name" value="UPF0176_N"/>
    <property type="match status" value="1"/>
</dbReference>
<dbReference type="SMART" id="SM00450">
    <property type="entry name" value="RHOD"/>
    <property type="match status" value="1"/>
</dbReference>
<dbReference type="SUPFAM" id="SSF52821">
    <property type="entry name" value="Rhodanese/Cell cycle control phosphatase"/>
    <property type="match status" value="1"/>
</dbReference>
<dbReference type="PROSITE" id="PS50206">
    <property type="entry name" value="RHODANESE_3"/>
    <property type="match status" value="1"/>
</dbReference>
<evidence type="ECO:0000255" key="1">
    <source>
        <dbReference type="HAMAP-Rule" id="MF_00469"/>
    </source>
</evidence>